<reference key="1">
    <citation type="journal article" date="2002" name="DNA Res.">
        <title>Complete genomic sequence of nitrogen-fixing symbiotic bacterium Bradyrhizobium japonicum USDA110.</title>
        <authorList>
            <person name="Kaneko T."/>
            <person name="Nakamura Y."/>
            <person name="Sato S."/>
            <person name="Minamisawa K."/>
            <person name="Uchiumi T."/>
            <person name="Sasamoto S."/>
            <person name="Watanabe A."/>
            <person name="Idesawa K."/>
            <person name="Iriguchi M."/>
            <person name="Kawashima K."/>
            <person name="Kohara M."/>
            <person name="Matsumoto M."/>
            <person name="Shimpo S."/>
            <person name="Tsuruoka H."/>
            <person name="Wada T."/>
            <person name="Yamada M."/>
            <person name="Tabata S."/>
        </authorList>
    </citation>
    <scope>NUCLEOTIDE SEQUENCE [LARGE SCALE GENOMIC DNA]</scope>
    <source>
        <strain>JCM 10833 / BCRC 13528 / IAM 13628 / NBRC 14792 / USDA 110</strain>
    </source>
</reference>
<name>SECA_BRADU</name>
<feature type="chain" id="PRO_0000320744" description="Protein translocase subunit SecA">
    <location>
        <begin position="1"/>
        <end position="946"/>
    </location>
</feature>
<feature type="region of interest" description="Disordered" evidence="2">
    <location>
        <begin position="905"/>
        <end position="926"/>
    </location>
</feature>
<feature type="binding site" evidence="1">
    <location>
        <position position="87"/>
    </location>
    <ligand>
        <name>ATP</name>
        <dbReference type="ChEBI" id="CHEBI:30616"/>
    </ligand>
</feature>
<feature type="binding site" evidence="1">
    <location>
        <begin position="105"/>
        <end position="109"/>
    </location>
    <ligand>
        <name>ATP</name>
        <dbReference type="ChEBI" id="CHEBI:30616"/>
    </ligand>
</feature>
<feature type="binding site" evidence="1">
    <location>
        <position position="524"/>
    </location>
    <ligand>
        <name>ATP</name>
        <dbReference type="ChEBI" id="CHEBI:30616"/>
    </ligand>
</feature>
<feature type="binding site" evidence="1">
    <location>
        <position position="930"/>
    </location>
    <ligand>
        <name>Zn(2+)</name>
        <dbReference type="ChEBI" id="CHEBI:29105"/>
    </ligand>
</feature>
<feature type="binding site" evidence="1">
    <location>
        <position position="932"/>
    </location>
    <ligand>
        <name>Zn(2+)</name>
        <dbReference type="ChEBI" id="CHEBI:29105"/>
    </ligand>
</feature>
<feature type="binding site" evidence="1">
    <location>
        <position position="941"/>
    </location>
    <ligand>
        <name>Zn(2+)</name>
        <dbReference type="ChEBI" id="CHEBI:29105"/>
    </ligand>
</feature>
<feature type="binding site" evidence="1">
    <location>
        <position position="942"/>
    </location>
    <ligand>
        <name>Zn(2+)</name>
        <dbReference type="ChEBI" id="CHEBI:29105"/>
    </ligand>
</feature>
<proteinExistence type="inferred from homology"/>
<protein>
    <recommendedName>
        <fullName evidence="1">Protein translocase subunit SecA</fullName>
        <ecNumber evidence="1">7.4.2.8</ecNumber>
    </recommendedName>
</protein>
<accession>Q89XV1</accession>
<organism>
    <name type="scientific">Bradyrhizobium diazoefficiens (strain JCM 10833 / BCRC 13528 / IAM 13628 / NBRC 14792 / USDA 110)</name>
    <dbReference type="NCBI Taxonomy" id="224911"/>
    <lineage>
        <taxon>Bacteria</taxon>
        <taxon>Pseudomonadati</taxon>
        <taxon>Pseudomonadota</taxon>
        <taxon>Alphaproteobacteria</taxon>
        <taxon>Hyphomicrobiales</taxon>
        <taxon>Nitrobacteraceae</taxon>
        <taxon>Bradyrhizobium</taxon>
    </lineage>
</organism>
<dbReference type="EC" id="7.4.2.8" evidence="1"/>
<dbReference type="EMBL" id="BA000040">
    <property type="protein sequence ID" value="BAC45469.1"/>
    <property type="molecule type" value="Genomic_DNA"/>
</dbReference>
<dbReference type="RefSeq" id="NP_766844.1">
    <property type="nucleotide sequence ID" value="NC_004463.1"/>
</dbReference>
<dbReference type="RefSeq" id="WP_011083036.1">
    <property type="nucleotide sequence ID" value="NC_004463.1"/>
</dbReference>
<dbReference type="SMR" id="Q89XV1"/>
<dbReference type="FunCoup" id="Q89XV1">
    <property type="interactions" value="743"/>
</dbReference>
<dbReference type="STRING" id="224911.AAV28_40265"/>
<dbReference type="EnsemblBacteria" id="BAC45469">
    <property type="protein sequence ID" value="BAC45469"/>
    <property type="gene ID" value="BAC45469"/>
</dbReference>
<dbReference type="GeneID" id="46495356"/>
<dbReference type="KEGG" id="bja:bll0204"/>
<dbReference type="PATRIC" id="fig|224911.44.peg.8724"/>
<dbReference type="eggNOG" id="COG0653">
    <property type="taxonomic scope" value="Bacteria"/>
</dbReference>
<dbReference type="HOGENOM" id="CLU_005314_3_0_5"/>
<dbReference type="InParanoid" id="Q89XV1"/>
<dbReference type="OrthoDB" id="9805579at2"/>
<dbReference type="PhylomeDB" id="Q89XV1"/>
<dbReference type="Proteomes" id="UP000002526">
    <property type="component" value="Chromosome"/>
</dbReference>
<dbReference type="GO" id="GO:0031522">
    <property type="term" value="C:cell envelope Sec protein transport complex"/>
    <property type="evidence" value="ECO:0000318"/>
    <property type="project" value="GO_Central"/>
</dbReference>
<dbReference type="GO" id="GO:0005737">
    <property type="term" value="C:cytoplasm"/>
    <property type="evidence" value="ECO:0007669"/>
    <property type="project" value="UniProtKB-SubCell"/>
</dbReference>
<dbReference type="GO" id="GO:0005886">
    <property type="term" value="C:plasma membrane"/>
    <property type="evidence" value="ECO:0000318"/>
    <property type="project" value="GO_Central"/>
</dbReference>
<dbReference type="GO" id="GO:0005524">
    <property type="term" value="F:ATP binding"/>
    <property type="evidence" value="ECO:0000318"/>
    <property type="project" value="GO_Central"/>
</dbReference>
<dbReference type="GO" id="GO:0046872">
    <property type="term" value="F:metal ion binding"/>
    <property type="evidence" value="ECO:0007669"/>
    <property type="project" value="UniProtKB-KW"/>
</dbReference>
<dbReference type="GO" id="GO:0008564">
    <property type="term" value="F:protein-exporting ATPase activity"/>
    <property type="evidence" value="ECO:0007669"/>
    <property type="project" value="UniProtKB-EC"/>
</dbReference>
<dbReference type="GO" id="GO:0065002">
    <property type="term" value="P:intracellular protein transmembrane transport"/>
    <property type="evidence" value="ECO:0007669"/>
    <property type="project" value="UniProtKB-UniRule"/>
</dbReference>
<dbReference type="GO" id="GO:0017038">
    <property type="term" value="P:protein import"/>
    <property type="evidence" value="ECO:0007669"/>
    <property type="project" value="InterPro"/>
</dbReference>
<dbReference type="GO" id="GO:0006605">
    <property type="term" value="P:protein targeting"/>
    <property type="evidence" value="ECO:0007669"/>
    <property type="project" value="UniProtKB-UniRule"/>
</dbReference>
<dbReference type="GO" id="GO:0043952">
    <property type="term" value="P:protein transport by the Sec complex"/>
    <property type="evidence" value="ECO:0000318"/>
    <property type="project" value="GO_Central"/>
</dbReference>
<dbReference type="CDD" id="cd17928">
    <property type="entry name" value="DEXDc_SecA"/>
    <property type="match status" value="1"/>
</dbReference>
<dbReference type="CDD" id="cd18803">
    <property type="entry name" value="SF2_C_secA"/>
    <property type="match status" value="1"/>
</dbReference>
<dbReference type="FunFam" id="3.90.1440.10:FF:000001">
    <property type="entry name" value="Preprotein translocase subunit SecA"/>
    <property type="match status" value="1"/>
</dbReference>
<dbReference type="FunFam" id="1.10.3060.10:FF:000003">
    <property type="entry name" value="Protein translocase subunit SecA"/>
    <property type="match status" value="1"/>
</dbReference>
<dbReference type="FunFam" id="3.40.50.300:FF:000334">
    <property type="entry name" value="Protein translocase subunit SecA"/>
    <property type="match status" value="1"/>
</dbReference>
<dbReference type="FunFam" id="3.40.50.300:FF:001790">
    <property type="entry name" value="Protein translocase subunit SecA"/>
    <property type="match status" value="1"/>
</dbReference>
<dbReference type="Gene3D" id="1.10.3060.10">
    <property type="entry name" value="Helical scaffold and wing domains of SecA"/>
    <property type="match status" value="1"/>
</dbReference>
<dbReference type="Gene3D" id="3.40.50.300">
    <property type="entry name" value="P-loop containing nucleotide triphosphate hydrolases"/>
    <property type="match status" value="2"/>
</dbReference>
<dbReference type="Gene3D" id="3.90.1440.10">
    <property type="entry name" value="SecA, preprotein cross-linking domain"/>
    <property type="match status" value="1"/>
</dbReference>
<dbReference type="HAMAP" id="MF_01382">
    <property type="entry name" value="SecA"/>
    <property type="match status" value="1"/>
</dbReference>
<dbReference type="InterPro" id="IPR014001">
    <property type="entry name" value="Helicase_ATP-bd"/>
</dbReference>
<dbReference type="InterPro" id="IPR027417">
    <property type="entry name" value="P-loop_NTPase"/>
</dbReference>
<dbReference type="InterPro" id="IPR004027">
    <property type="entry name" value="SEC_C_motif"/>
</dbReference>
<dbReference type="InterPro" id="IPR000185">
    <property type="entry name" value="SecA"/>
</dbReference>
<dbReference type="InterPro" id="IPR020937">
    <property type="entry name" value="SecA_CS"/>
</dbReference>
<dbReference type="InterPro" id="IPR011115">
    <property type="entry name" value="SecA_DEAD"/>
</dbReference>
<dbReference type="InterPro" id="IPR014018">
    <property type="entry name" value="SecA_motor_DEAD"/>
</dbReference>
<dbReference type="InterPro" id="IPR011130">
    <property type="entry name" value="SecA_preprotein_X-link_dom"/>
</dbReference>
<dbReference type="InterPro" id="IPR044722">
    <property type="entry name" value="SecA_SF2_C"/>
</dbReference>
<dbReference type="InterPro" id="IPR011116">
    <property type="entry name" value="SecA_Wing/Scaffold"/>
</dbReference>
<dbReference type="InterPro" id="IPR036266">
    <property type="entry name" value="SecA_Wing/Scaffold_sf"/>
</dbReference>
<dbReference type="InterPro" id="IPR036670">
    <property type="entry name" value="SecA_X-link_sf"/>
</dbReference>
<dbReference type="NCBIfam" id="NF009538">
    <property type="entry name" value="PRK12904.1"/>
    <property type="match status" value="1"/>
</dbReference>
<dbReference type="NCBIfam" id="TIGR00963">
    <property type="entry name" value="secA"/>
    <property type="match status" value="1"/>
</dbReference>
<dbReference type="PANTHER" id="PTHR30612:SF0">
    <property type="entry name" value="CHLOROPLAST PROTEIN-TRANSPORTING ATPASE"/>
    <property type="match status" value="1"/>
</dbReference>
<dbReference type="PANTHER" id="PTHR30612">
    <property type="entry name" value="SECA INNER MEMBRANE COMPONENT OF SEC PROTEIN SECRETION SYSTEM"/>
    <property type="match status" value="1"/>
</dbReference>
<dbReference type="Pfam" id="PF21090">
    <property type="entry name" value="P-loop_SecA"/>
    <property type="match status" value="1"/>
</dbReference>
<dbReference type="Pfam" id="PF02810">
    <property type="entry name" value="SEC-C"/>
    <property type="match status" value="1"/>
</dbReference>
<dbReference type="Pfam" id="PF07517">
    <property type="entry name" value="SecA_DEAD"/>
    <property type="match status" value="1"/>
</dbReference>
<dbReference type="Pfam" id="PF01043">
    <property type="entry name" value="SecA_PP_bind"/>
    <property type="match status" value="1"/>
</dbReference>
<dbReference type="Pfam" id="PF07516">
    <property type="entry name" value="SecA_SW"/>
    <property type="match status" value="1"/>
</dbReference>
<dbReference type="PRINTS" id="PR00906">
    <property type="entry name" value="SECA"/>
</dbReference>
<dbReference type="SMART" id="SM00957">
    <property type="entry name" value="SecA_DEAD"/>
    <property type="match status" value="1"/>
</dbReference>
<dbReference type="SMART" id="SM00958">
    <property type="entry name" value="SecA_PP_bind"/>
    <property type="match status" value="1"/>
</dbReference>
<dbReference type="SUPFAM" id="SSF81886">
    <property type="entry name" value="Helical scaffold and wing domains of SecA"/>
    <property type="match status" value="1"/>
</dbReference>
<dbReference type="SUPFAM" id="SSF52540">
    <property type="entry name" value="P-loop containing nucleoside triphosphate hydrolases"/>
    <property type="match status" value="2"/>
</dbReference>
<dbReference type="SUPFAM" id="SSF81767">
    <property type="entry name" value="Pre-protein crosslinking domain of SecA"/>
    <property type="match status" value="1"/>
</dbReference>
<dbReference type="PROSITE" id="PS01312">
    <property type="entry name" value="SECA"/>
    <property type="match status" value="1"/>
</dbReference>
<dbReference type="PROSITE" id="PS51196">
    <property type="entry name" value="SECA_MOTOR_DEAD"/>
    <property type="match status" value="1"/>
</dbReference>
<gene>
    <name evidence="1" type="primary">secA</name>
    <name type="ordered locus">bll0204</name>
</gene>
<comment type="function">
    <text evidence="1">Part of the Sec protein translocase complex. Interacts with the SecYEG preprotein conducting channel. Has a central role in coupling the hydrolysis of ATP to the transfer of proteins into and across the cell membrane, serving both as a receptor for the preprotein-SecB complex and as an ATP-driven molecular motor driving the stepwise translocation of polypeptide chains across the membrane.</text>
</comment>
<comment type="catalytic activity">
    <reaction evidence="1">
        <text>ATP + H2O + cellular proteinSide 1 = ADP + phosphate + cellular proteinSide 2.</text>
        <dbReference type="EC" id="7.4.2.8"/>
    </reaction>
</comment>
<comment type="cofactor">
    <cofactor evidence="1">
        <name>Zn(2+)</name>
        <dbReference type="ChEBI" id="CHEBI:29105"/>
    </cofactor>
    <text evidence="1">May bind 1 zinc ion per subunit.</text>
</comment>
<comment type="subunit">
    <text evidence="1">Monomer and homodimer. Part of the essential Sec protein translocation apparatus which comprises SecA, SecYEG and auxiliary proteins SecDF-YajC and YidC.</text>
</comment>
<comment type="subcellular location">
    <subcellularLocation>
        <location evidence="1">Cell inner membrane</location>
        <topology evidence="1">Peripheral membrane protein</topology>
        <orientation evidence="1">Cytoplasmic side</orientation>
    </subcellularLocation>
    <subcellularLocation>
        <location evidence="1">Cytoplasm</location>
    </subcellularLocation>
    <text evidence="1">Distribution is 50-50.</text>
</comment>
<comment type="similarity">
    <text evidence="1">Belongs to the SecA family.</text>
</comment>
<keyword id="KW-0067">ATP-binding</keyword>
<keyword id="KW-0997">Cell inner membrane</keyword>
<keyword id="KW-1003">Cell membrane</keyword>
<keyword id="KW-0963">Cytoplasm</keyword>
<keyword id="KW-0472">Membrane</keyword>
<keyword id="KW-0479">Metal-binding</keyword>
<keyword id="KW-0547">Nucleotide-binding</keyword>
<keyword id="KW-0653">Protein transport</keyword>
<keyword id="KW-1185">Reference proteome</keyword>
<keyword id="KW-1278">Translocase</keyword>
<keyword id="KW-0811">Translocation</keyword>
<keyword id="KW-0813">Transport</keyword>
<keyword id="KW-0862">Zinc</keyword>
<evidence type="ECO:0000255" key="1">
    <source>
        <dbReference type="HAMAP-Rule" id="MF_01382"/>
    </source>
</evidence>
<evidence type="ECO:0000256" key="2">
    <source>
        <dbReference type="SAM" id="MobiDB-lite"/>
    </source>
</evidence>
<sequence length="946" mass="106603">MIGALARKFFGSANDRRVKGYQSRVNAINALEPELIKLSDEELKARTADFKKQLAEGKTLDDLLVPAFATVREAAKRTLGQRHFDVQLIGGMVLHEGDIAEMKTGEGKTLVATLAVYLNALAGKGVHVVTVNDYLARRDSGWMGQIYGFLGMTTGVIVHGLDDAERKTAYACDITYGTNNEYGFDYLRDNMKYRLEDMVQRPHFFAIVDEVDSILIDEARTPLIISGPLDDRSDFYNTIDGFLPKLDKTDYDVDEKQRTVTLTEAGMEKIETLLRDAGQLKGESLYDVENVSVVHHINQALRAHTLFTRDKDYIVRDDEVVIIDEFTGRMMPGRRYSEGLHQALEAKEHVQVQPENQTLASITFQNYFRMYEKLAGMTGTAATEADELFDIYKLEVVEIPTNLSVARLDEDDEVYRTQKEKYAAILAEIERANARLQPVLVGTASIEKSEVLAEFLKSNGYKQIDFGKENALDKLYAAARAGKPSKLFAVLNARFHEQEAYIVAEAGVPGAITIATNMAGRGTDIKLGGSLEMRVPKETAGIEDEAEKARKIEQIKADVERFREIVLKAEEIVEIEPAKGSKPAKTVTKPGGLYIIGSERHESRRIDNQLRGRSGRQGDPGRSKFFLSLEDDLMRIFGSDRLDSMLQRLGLQEGEAIIHPWINKALEKAQQKVEARNFDIRKNLLKFDNVQNDQRKVIFDQRVDLMKDDSVAETVTDMRHAFIDDLVAKHVPEHAYAEQWDVAGLKEELKRVLDLDLPVDDWAKEEGIADEELLNRIENRADEHMAAKVAQWGPDVMRYVEKTILLQTLDHLWREHLIMLDHLRQVIGLRGYGQRDPLQEYKTEAFNLFQEMSAHLREAVTAQLMRVEIVPPEQEAPVLPPMEAHKFDPNTGEDEMALASVTLGAPASDAAQRDPKNPASWGKIGRNEDCPCGSGKKYKHCHGRYA</sequence>